<protein>
    <recommendedName>
        <fullName>FMRFamide-like neuropeptide GDPFLRF-amide</fullName>
    </recommendedName>
</protein>
<accession>P41871</accession>
<comment type="function">
    <text>Appears to be involved in osmoregulation by affecting the kidney, mantle and skin.</text>
</comment>
<comment type="subcellular location">
    <subcellularLocation>
        <location>Secreted</location>
    </subcellularLocation>
</comment>
<comment type="tissue specificity">
    <text>Kidney, skin, mantle and the hemolymph.</text>
</comment>
<comment type="similarity">
    <text evidence="2">Belongs to the FARP (FMRFamide related peptide) family.</text>
</comment>
<organism>
    <name type="scientific">Planorbella trivolvis</name>
    <name type="common">Marsh rams-horn</name>
    <name type="synonym">Helisoma trivolvis</name>
    <dbReference type="NCBI Taxonomy" id="283763"/>
    <lineage>
        <taxon>Eukaryota</taxon>
        <taxon>Metazoa</taxon>
        <taxon>Spiralia</taxon>
        <taxon>Lophotrochozoa</taxon>
        <taxon>Mollusca</taxon>
        <taxon>Gastropoda</taxon>
        <taxon>Heterobranchia</taxon>
        <taxon>Euthyneura</taxon>
        <taxon>Panpulmonata</taxon>
        <taxon>Hygrophila</taxon>
        <taxon>Lymnaeoidea</taxon>
        <taxon>Planorbidae</taxon>
        <taxon>Planorbella</taxon>
    </lineage>
</organism>
<sequence>GDPFLRF</sequence>
<feature type="peptide" id="PRO_0000043678" description="FMRFamide-like neuropeptide GDPFLRF-amide">
    <location>
        <begin position="1"/>
        <end position="7"/>
    </location>
</feature>
<feature type="modified residue" description="Phenylalanine amide" evidence="1">
    <location>
        <position position="7"/>
    </location>
</feature>
<keyword id="KW-0027">Amidation</keyword>
<keyword id="KW-0903">Direct protein sequencing</keyword>
<keyword id="KW-0527">Neuropeptide</keyword>
<keyword id="KW-0964">Secreted</keyword>
<reference key="1">
    <citation type="journal article" date="1994" name="Peptides">
        <title>FMRFamide-related peptides from the kidney of the snail, Helisoma trivolvis.</title>
        <authorList>
            <person name="Madrid K.P."/>
            <person name="Price D.A."/>
            <person name="Greenberg M.J."/>
            <person name="Khan H.R."/>
            <person name="Saleuddin A.S.M."/>
        </authorList>
    </citation>
    <scope>PROTEIN SEQUENCE</scope>
    <scope>AMIDATION AT PHE-7</scope>
    <source>
        <tissue>Kidney</tissue>
    </source>
</reference>
<name>FAR1_PLATR</name>
<dbReference type="GO" id="GO:0005576">
    <property type="term" value="C:extracellular region"/>
    <property type="evidence" value="ECO:0007669"/>
    <property type="project" value="UniProtKB-SubCell"/>
</dbReference>
<dbReference type="GO" id="GO:0007218">
    <property type="term" value="P:neuropeptide signaling pathway"/>
    <property type="evidence" value="ECO:0007669"/>
    <property type="project" value="UniProtKB-KW"/>
</dbReference>
<evidence type="ECO:0000269" key="1">
    <source>
    </source>
</evidence>
<evidence type="ECO:0000305" key="2"/>
<proteinExistence type="evidence at protein level"/>